<accession>P53715</accession>
<accession>O19136</accession>
<evidence type="ECO:0000250" key="1"/>
<evidence type="ECO:0000250" key="2">
    <source>
        <dbReference type="UniProtKB" id="P31025"/>
    </source>
</evidence>
<evidence type="ECO:0000255" key="3"/>
<evidence type="ECO:0000305" key="4"/>
<name>LCN1_PIG</name>
<organism>
    <name type="scientific">Sus scrofa</name>
    <name type="common">Pig</name>
    <dbReference type="NCBI Taxonomy" id="9823"/>
    <lineage>
        <taxon>Eukaryota</taxon>
        <taxon>Metazoa</taxon>
        <taxon>Chordata</taxon>
        <taxon>Craniata</taxon>
        <taxon>Vertebrata</taxon>
        <taxon>Euteleostomi</taxon>
        <taxon>Mammalia</taxon>
        <taxon>Eutheria</taxon>
        <taxon>Laurasiatheria</taxon>
        <taxon>Artiodactyla</taxon>
        <taxon>Suina</taxon>
        <taxon>Suidae</taxon>
        <taxon>Sus</taxon>
    </lineage>
</organism>
<keyword id="KW-0903">Direct protein sequencing</keyword>
<keyword id="KW-1015">Disulfide bond</keyword>
<keyword id="KW-1185">Reference proteome</keyword>
<keyword id="KW-0964">Secreted</keyword>
<keyword id="KW-0716">Sensory transduction</keyword>
<keyword id="KW-0732">Signal</keyword>
<keyword id="KW-0919">Taste</keyword>
<keyword id="KW-0813">Transport</keyword>
<gene>
    <name type="primary">LCN1</name>
</gene>
<dbReference type="EMBL" id="S77587">
    <property type="protein sequence ID" value="AAB34720.1"/>
    <property type="molecule type" value="mRNA"/>
</dbReference>
<dbReference type="EMBL" id="U96150">
    <property type="protein sequence ID" value="AAC39166.1"/>
    <property type="molecule type" value="Genomic_DNA"/>
</dbReference>
<dbReference type="PIR" id="JC6503">
    <property type="entry name" value="JC6503"/>
</dbReference>
<dbReference type="RefSeq" id="NP_999021.2">
    <property type="nucleotide sequence ID" value="NM_213856.2"/>
</dbReference>
<dbReference type="SMR" id="P53715"/>
<dbReference type="FunCoup" id="P53715">
    <property type="interactions" value="95"/>
</dbReference>
<dbReference type="STRING" id="9823.ENSSSCP00000061306"/>
<dbReference type="GlyGen" id="P53715">
    <property type="glycosylation" value="1 site, 1 O-linked glycan (1 site)"/>
</dbReference>
<dbReference type="iPTMnet" id="P53715"/>
<dbReference type="PeptideAtlas" id="P53715"/>
<dbReference type="Ensembl" id="ENSSSCT00045055016.1">
    <property type="protein sequence ID" value="ENSSSCP00045038345.1"/>
    <property type="gene ID" value="ENSSSCG00045032182.1"/>
</dbReference>
<dbReference type="Ensembl" id="ENSSSCT00070010794.1">
    <property type="protein sequence ID" value="ENSSSCP00070008883.1"/>
    <property type="gene ID" value="ENSSSCG00070005682.1"/>
</dbReference>
<dbReference type="Ensembl" id="ENSSSCT00110077098">
    <property type="protein sequence ID" value="ENSSSCP00110054487"/>
    <property type="gene ID" value="ENSSSCG00110040349"/>
</dbReference>
<dbReference type="Ensembl" id="ENSSSCT00130070838">
    <property type="protein sequence ID" value="ENSSSCP00130051185"/>
    <property type="gene ID" value="ENSSSCG00130036143"/>
</dbReference>
<dbReference type="GeneID" id="396861"/>
<dbReference type="KEGG" id="ssc:396861"/>
<dbReference type="CTD" id="29989"/>
<dbReference type="InParanoid" id="P53715"/>
<dbReference type="OrthoDB" id="9447591at2759"/>
<dbReference type="Reactome" id="R-SSC-804914">
    <property type="pathway name" value="Transport of fatty acids"/>
</dbReference>
<dbReference type="Proteomes" id="UP000008227">
    <property type="component" value="Unplaced"/>
</dbReference>
<dbReference type="Proteomes" id="UP000314985">
    <property type="component" value="Chromosome 1"/>
</dbReference>
<dbReference type="Proteomes" id="UP000694570">
    <property type="component" value="Unplaced"/>
</dbReference>
<dbReference type="Proteomes" id="UP000694571">
    <property type="component" value="Unplaced"/>
</dbReference>
<dbReference type="Proteomes" id="UP000694720">
    <property type="component" value="Unplaced"/>
</dbReference>
<dbReference type="Proteomes" id="UP000694722">
    <property type="component" value="Unplaced"/>
</dbReference>
<dbReference type="Proteomes" id="UP000694723">
    <property type="component" value="Unplaced"/>
</dbReference>
<dbReference type="Proteomes" id="UP000694724">
    <property type="component" value="Unplaced"/>
</dbReference>
<dbReference type="Proteomes" id="UP000694725">
    <property type="component" value="Unplaced"/>
</dbReference>
<dbReference type="Proteomes" id="UP000694726">
    <property type="component" value="Unplaced"/>
</dbReference>
<dbReference type="Proteomes" id="UP000694727">
    <property type="component" value="Unplaced"/>
</dbReference>
<dbReference type="Proteomes" id="UP000694728">
    <property type="component" value="Unplaced"/>
</dbReference>
<dbReference type="GO" id="GO:0005615">
    <property type="term" value="C:extracellular space"/>
    <property type="evidence" value="ECO:0000318"/>
    <property type="project" value="GO_Central"/>
</dbReference>
<dbReference type="GO" id="GO:0036094">
    <property type="term" value="F:small molecule binding"/>
    <property type="evidence" value="ECO:0007669"/>
    <property type="project" value="InterPro"/>
</dbReference>
<dbReference type="GO" id="GO:0050909">
    <property type="term" value="P:sensory perception of taste"/>
    <property type="evidence" value="ECO:0007669"/>
    <property type="project" value="UniProtKB-KW"/>
</dbReference>
<dbReference type="CDD" id="cd19414">
    <property type="entry name" value="lipocalin_1_3_4_13-like"/>
    <property type="match status" value="1"/>
</dbReference>
<dbReference type="Gene3D" id="2.40.128.20">
    <property type="match status" value="1"/>
</dbReference>
<dbReference type="InterPro" id="IPR012674">
    <property type="entry name" value="Calycin"/>
</dbReference>
<dbReference type="InterPro" id="IPR002345">
    <property type="entry name" value="Lipocalin"/>
</dbReference>
<dbReference type="InterPro" id="IPR000566">
    <property type="entry name" value="Lipocln_cytosolic_FA-bd_dom"/>
</dbReference>
<dbReference type="InterPro" id="IPR002450">
    <property type="entry name" value="von_Ebner_gland"/>
</dbReference>
<dbReference type="PANTHER" id="PTHR11430">
    <property type="entry name" value="LIPOCALIN"/>
    <property type="match status" value="1"/>
</dbReference>
<dbReference type="PANTHER" id="PTHR11430:SF124">
    <property type="entry name" value="LIPOCALIN 1-LIKE PROTEIN 1-RELATED"/>
    <property type="match status" value="1"/>
</dbReference>
<dbReference type="Pfam" id="PF00061">
    <property type="entry name" value="Lipocalin"/>
    <property type="match status" value="1"/>
</dbReference>
<dbReference type="PRINTS" id="PR01175">
    <property type="entry name" value="VNEBNERGLAND"/>
</dbReference>
<dbReference type="SUPFAM" id="SSF50814">
    <property type="entry name" value="Lipocalins"/>
    <property type="match status" value="1"/>
</dbReference>
<protein>
    <recommendedName>
        <fullName>Lipocalin-1</fullName>
    </recommendedName>
    <alternativeName>
        <fullName>Tear lipocalin</fullName>
        <shortName>Tlc</shortName>
    </alternativeName>
    <alternativeName>
        <fullName>Tear prealbumin</fullName>
        <shortName>TP</shortName>
    </alternativeName>
    <alternativeName>
        <fullName>Von Ebner gland protein</fullName>
        <shortName>VEG protein</shortName>
    </alternativeName>
</protein>
<feature type="signal peptide" evidence="3">
    <location>
        <begin position="1"/>
        <end position="19"/>
    </location>
</feature>
<feature type="chain" id="PRO_0000017975" description="Lipocalin-1">
    <location>
        <begin position="20"/>
        <end position="176"/>
    </location>
</feature>
<feature type="disulfide bond" evidence="1">
    <location>
        <begin position="80"/>
        <end position="171"/>
    </location>
</feature>
<feature type="sequence conflict" description="In Ref. 2; AAC39166." evidence="4" ref="2">
    <original>G</original>
    <variation>A</variation>
    <location>
        <position position="136"/>
    </location>
</feature>
<reference key="1">
    <citation type="journal article" date="1995" name="Chem. Senses">
        <title>Porcine VEG proteins and tear prealbumins.</title>
        <authorList>
            <person name="Garibotti M."/>
            <person name="Christiansen H."/>
            <person name="Schmale H."/>
            <person name="Pelosi P."/>
        </authorList>
    </citation>
    <scope>NUCLEOTIDE SEQUENCE [MRNA]</scope>
    <scope>PARTIAL PROTEIN SEQUENCE</scope>
</reference>
<reference key="2">
    <citation type="journal article" date="1997" name="Gene">
        <title>Structure and organization of the porcine LCN1 gene encoding tear lipocalin/von Ebner's gland protein.</title>
        <authorList>
            <person name="Holzfeind P."/>
            <person name="Merschak P."/>
            <person name="Wojnar P."/>
            <person name="Redl B."/>
        </authorList>
    </citation>
    <scope>NUCLEOTIDE SEQUENCE [GENOMIC DNA]</scope>
    <source>
        <tissue>Liver</tissue>
    </source>
</reference>
<comment type="function">
    <text evidence="1">Could play a role in taste reception. Could be necessary for the concentration and delivery of sapid molecules in the gustatory system. Can bind various ligands, with chemical structures ranging from lipids and retinoids to the macrocyclic antibiotic rifampicin and even to microbial siderophores. Exhibits an extremely wide ligand pocket (By similarity).</text>
</comment>
<comment type="subunit">
    <text evidence="2">Predominantly monomer (By similarity). May form homodimer (By similarity). Interacts with LMBR1L; this interaction mediates the endocytosis of LCN1 (By similarity).</text>
</comment>
<comment type="subcellular location">
    <subcellularLocation>
        <location>Secreted</location>
    </subcellularLocation>
</comment>
<comment type="similarity">
    <text evidence="4">Belongs to the calycin superfamily. Lipocalin family.</text>
</comment>
<proteinExistence type="evidence at protein level"/>
<sequence>MMRALLLAIGLGLVAALQAQEFPAVGQPLQDLLGRWYLKAMTSDPEIPGKKPESVTPLILKALEGGDLEAQITFLIDGQCQDVTLVLKKTNQPFTFTAYDGKRVVYILPSKVKDHYILYCEGELDGQEVRMAKLVGRDPENNPEALEEFKEVARAKGLNPDIVRPQQSETCSPGGN</sequence>